<proteinExistence type="inferred from homology"/>
<accession>C3K6U9</accession>
<keyword id="KW-0028">Amino-acid biosynthesis</keyword>
<keyword id="KW-0963">Cytoplasm</keyword>
<keyword id="KW-0368">Histidine biosynthesis</keyword>
<keyword id="KW-0456">Lyase</keyword>
<comment type="catalytic activity">
    <reaction evidence="1">
        <text>D-erythro-1-(imidazol-4-yl)glycerol 3-phosphate = 3-(imidazol-4-yl)-2-oxopropyl phosphate + H2O</text>
        <dbReference type="Rhea" id="RHEA:11040"/>
        <dbReference type="ChEBI" id="CHEBI:15377"/>
        <dbReference type="ChEBI" id="CHEBI:57766"/>
        <dbReference type="ChEBI" id="CHEBI:58278"/>
        <dbReference type="EC" id="4.2.1.19"/>
    </reaction>
</comment>
<comment type="pathway">
    <text evidence="1">Amino-acid biosynthesis; L-histidine biosynthesis; L-histidine from 5-phospho-alpha-D-ribose 1-diphosphate: step 6/9.</text>
</comment>
<comment type="subcellular location">
    <subcellularLocation>
        <location evidence="1">Cytoplasm</location>
    </subcellularLocation>
</comment>
<comment type="similarity">
    <text evidence="1">Belongs to the imidazoleglycerol-phosphate dehydratase family.</text>
</comment>
<reference key="1">
    <citation type="journal article" date="2009" name="Genome Biol.">
        <title>Genomic and genetic analyses of diversity and plant interactions of Pseudomonas fluorescens.</title>
        <authorList>
            <person name="Silby M.W."/>
            <person name="Cerdeno-Tarraga A.M."/>
            <person name="Vernikos G.S."/>
            <person name="Giddens S.R."/>
            <person name="Jackson R.W."/>
            <person name="Preston G.M."/>
            <person name="Zhang X.-X."/>
            <person name="Moon C.D."/>
            <person name="Gehrig S.M."/>
            <person name="Godfrey S.A.C."/>
            <person name="Knight C.G."/>
            <person name="Malone J.G."/>
            <person name="Robinson Z."/>
            <person name="Spiers A.J."/>
            <person name="Harris S."/>
            <person name="Challis G.L."/>
            <person name="Yaxley A.M."/>
            <person name="Harris D."/>
            <person name="Seeger K."/>
            <person name="Murphy L."/>
            <person name="Rutter S."/>
            <person name="Squares R."/>
            <person name="Quail M.A."/>
            <person name="Saunders E."/>
            <person name="Mavromatis K."/>
            <person name="Brettin T.S."/>
            <person name="Bentley S.D."/>
            <person name="Hothersall J."/>
            <person name="Stephens E."/>
            <person name="Thomas C.M."/>
            <person name="Parkhill J."/>
            <person name="Levy S.B."/>
            <person name="Rainey P.B."/>
            <person name="Thomson N.R."/>
        </authorList>
    </citation>
    <scope>NUCLEOTIDE SEQUENCE [LARGE SCALE GENOMIC DNA]</scope>
    <source>
        <strain>SBW25</strain>
    </source>
</reference>
<organism>
    <name type="scientific">Pseudomonas fluorescens (strain SBW25)</name>
    <dbReference type="NCBI Taxonomy" id="216595"/>
    <lineage>
        <taxon>Bacteria</taxon>
        <taxon>Pseudomonadati</taxon>
        <taxon>Pseudomonadota</taxon>
        <taxon>Gammaproteobacteria</taxon>
        <taxon>Pseudomonadales</taxon>
        <taxon>Pseudomonadaceae</taxon>
        <taxon>Pseudomonas</taxon>
    </lineage>
</organism>
<gene>
    <name evidence="1" type="primary">hisB</name>
    <name type="ordered locus">PFLU_0327</name>
</gene>
<dbReference type="EC" id="4.2.1.19" evidence="1"/>
<dbReference type="EMBL" id="AM181176">
    <property type="protein sequence ID" value="CAY46604.1"/>
    <property type="molecule type" value="Genomic_DNA"/>
</dbReference>
<dbReference type="RefSeq" id="WP_003218037.1">
    <property type="nucleotide sequence ID" value="NC_012660.1"/>
</dbReference>
<dbReference type="SMR" id="C3K6U9"/>
<dbReference type="STRING" id="294.SRM1_00376"/>
<dbReference type="GeneID" id="97823205"/>
<dbReference type="eggNOG" id="COG0131">
    <property type="taxonomic scope" value="Bacteria"/>
</dbReference>
<dbReference type="HOGENOM" id="CLU_044308_3_0_6"/>
<dbReference type="OrthoDB" id="9790411at2"/>
<dbReference type="UniPathway" id="UPA00031">
    <property type="reaction ID" value="UER00011"/>
</dbReference>
<dbReference type="GO" id="GO:0005737">
    <property type="term" value="C:cytoplasm"/>
    <property type="evidence" value="ECO:0007669"/>
    <property type="project" value="UniProtKB-SubCell"/>
</dbReference>
<dbReference type="GO" id="GO:0004424">
    <property type="term" value="F:imidazoleglycerol-phosphate dehydratase activity"/>
    <property type="evidence" value="ECO:0007669"/>
    <property type="project" value="UniProtKB-UniRule"/>
</dbReference>
<dbReference type="GO" id="GO:0000105">
    <property type="term" value="P:L-histidine biosynthetic process"/>
    <property type="evidence" value="ECO:0007669"/>
    <property type="project" value="UniProtKB-UniRule"/>
</dbReference>
<dbReference type="CDD" id="cd07914">
    <property type="entry name" value="IGPD"/>
    <property type="match status" value="1"/>
</dbReference>
<dbReference type="FunFam" id="3.30.230.40:FF:000002">
    <property type="entry name" value="Imidazoleglycerol-phosphate dehydratase"/>
    <property type="match status" value="1"/>
</dbReference>
<dbReference type="FunFam" id="3.30.230.40:FF:000003">
    <property type="entry name" value="Imidazoleglycerol-phosphate dehydratase HisB"/>
    <property type="match status" value="1"/>
</dbReference>
<dbReference type="Gene3D" id="3.30.230.40">
    <property type="entry name" value="Imidazole glycerol phosphate dehydratase, domain 1"/>
    <property type="match status" value="2"/>
</dbReference>
<dbReference type="HAMAP" id="MF_00076">
    <property type="entry name" value="HisB"/>
    <property type="match status" value="1"/>
</dbReference>
<dbReference type="InterPro" id="IPR038494">
    <property type="entry name" value="IGPD_sf"/>
</dbReference>
<dbReference type="InterPro" id="IPR000807">
    <property type="entry name" value="ImidazoleglycerolP_deHydtase"/>
</dbReference>
<dbReference type="InterPro" id="IPR020565">
    <property type="entry name" value="ImidazoleglycerP_deHydtase_CS"/>
</dbReference>
<dbReference type="InterPro" id="IPR020568">
    <property type="entry name" value="Ribosomal_Su5_D2-typ_SF"/>
</dbReference>
<dbReference type="NCBIfam" id="NF002106">
    <property type="entry name" value="PRK00951.1-1"/>
    <property type="match status" value="1"/>
</dbReference>
<dbReference type="NCBIfam" id="NF002111">
    <property type="entry name" value="PRK00951.2-1"/>
    <property type="match status" value="1"/>
</dbReference>
<dbReference type="NCBIfam" id="NF002114">
    <property type="entry name" value="PRK00951.2-4"/>
    <property type="match status" value="1"/>
</dbReference>
<dbReference type="PANTHER" id="PTHR23133:SF2">
    <property type="entry name" value="IMIDAZOLEGLYCEROL-PHOSPHATE DEHYDRATASE"/>
    <property type="match status" value="1"/>
</dbReference>
<dbReference type="PANTHER" id="PTHR23133">
    <property type="entry name" value="IMIDAZOLEGLYCEROL-PHOSPHATE DEHYDRATASE HIS7"/>
    <property type="match status" value="1"/>
</dbReference>
<dbReference type="Pfam" id="PF00475">
    <property type="entry name" value="IGPD"/>
    <property type="match status" value="1"/>
</dbReference>
<dbReference type="SUPFAM" id="SSF54211">
    <property type="entry name" value="Ribosomal protein S5 domain 2-like"/>
    <property type="match status" value="2"/>
</dbReference>
<dbReference type="PROSITE" id="PS00954">
    <property type="entry name" value="IGP_DEHYDRATASE_1"/>
    <property type="match status" value="1"/>
</dbReference>
<dbReference type="PROSITE" id="PS00955">
    <property type="entry name" value="IGP_DEHYDRATASE_2"/>
    <property type="match status" value="1"/>
</dbReference>
<sequence length="197" mass="21844">MAERKASVERDTLETQIKASINLDGTGKARFDIGVPFLEHMLDQIARHGLIDLDIVSKGDLHIDDHHTVEDVGITLGQAFAKAIGDKKGIRRYGHAYVPLDEALSRVVIDFSGRPGLQMHVPYTRATVGGFDVDLFQEFFQGFVNHALVSLHIDNLRGTNTHHQIETVFKAFGRALRMAVELDDRMAGQMPSTKGVL</sequence>
<name>HIS7_PSEFS</name>
<evidence type="ECO:0000255" key="1">
    <source>
        <dbReference type="HAMAP-Rule" id="MF_00076"/>
    </source>
</evidence>
<protein>
    <recommendedName>
        <fullName evidence="1">Imidazoleglycerol-phosphate dehydratase</fullName>
        <shortName evidence="1">IGPD</shortName>
        <ecNumber evidence="1">4.2.1.19</ecNumber>
    </recommendedName>
</protein>
<feature type="chain" id="PRO_1000202516" description="Imidazoleglycerol-phosphate dehydratase">
    <location>
        <begin position="1"/>
        <end position="197"/>
    </location>
</feature>